<comment type="function">
    <text evidence="1">Involved in the biosynthesis of the osmoprotectant glycine betaine. Catalyzes the oxidation of choline to betaine aldehyde and betaine aldehyde to glycine betaine at the same rate.</text>
</comment>
<comment type="catalytic activity">
    <reaction evidence="1">
        <text>choline + A = betaine aldehyde + AH2</text>
        <dbReference type="Rhea" id="RHEA:17433"/>
        <dbReference type="ChEBI" id="CHEBI:13193"/>
        <dbReference type="ChEBI" id="CHEBI:15354"/>
        <dbReference type="ChEBI" id="CHEBI:15710"/>
        <dbReference type="ChEBI" id="CHEBI:17499"/>
        <dbReference type="EC" id="1.1.99.1"/>
    </reaction>
</comment>
<comment type="catalytic activity">
    <reaction evidence="1">
        <text>betaine aldehyde + NAD(+) + H2O = glycine betaine + NADH + 2 H(+)</text>
        <dbReference type="Rhea" id="RHEA:15305"/>
        <dbReference type="ChEBI" id="CHEBI:15377"/>
        <dbReference type="ChEBI" id="CHEBI:15378"/>
        <dbReference type="ChEBI" id="CHEBI:15710"/>
        <dbReference type="ChEBI" id="CHEBI:17750"/>
        <dbReference type="ChEBI" id="CHEBI:57540"/>
        <dbReference type="ChEBI" id="CHEBI:57945"/>
        <dbReference type="EC" id="1.2.1.8"/>
    </reaction>
</comment>
<comment type="cofactor">
    <cofactor evidence="1">
        <name>FAD</name>
        <dbReference type="ChEBI" id="CHEBI:57692"/>
    </cofactor>
</comment>
<comment type="pathway">
    <text evidence="1">Amine and polyamine biosynthesis; betaine biosynthesis via choline pathway; betaine aldehyde from choline (cytochrome c reductase route): step 1/1.</text>
</comment>
<comment type="similarity">
    <text evidence="1">Belongs to the GMC oxidoreductase family.</text>
</comment>
<name>BETA_STAAE</name>
<reference key="1">
    <citation type="journal article" date="2008" name="J. Bacteriol.">
        <title>Genome sequence of Staphylococcus aureus strain Newman and comparative analysis of staphylococcal genomes: polymorphism and evolution of two major pathogenicity islands.</title>
        <authorList>
            <person name="Baba T."/>
            <person name="Bae T."/>
            <person name="Schneewind O."/>
            <person name="Takeuchi F."/>
            <person name="Hiramatsu K."/>
        </authorList>
    </citation>
    <scope>NUCLEOTIDE SEQUENCE [LARGE SCALE GENOMIC DNA]</scope>
    <source>
        <strain>Newman</strain>
    </source>
</reference>
<accession>A6QK99</accession>
<organism>
    <name type="scientific">Staphylococcus aureus (strain Newman)</name>
    <dbReference type="NCBI Taxonomy" id="426430"/>
    <lineage>
        <taxon>Bacteria</taxon>
        <taxon>Bacillati</taxon>
        <taxon>Bacillota</taxon>
        <taxon>Bacilli</taxon>
        <taxon>Bacillales</taxon>
        <taxon>Staphylococcaceae</taxon>
        <taxon>Staphylococcus</taxon>
    </lineage>
</organism>
<protein>
    <recommendedName>
        <fullName evidence="1">Oxygen-dependent choline dehydrogenase</fullName>
        <shortName evidence="1">CDH</shortName>
        <shortName evidence="1">CHD</shortName>
        <ecNumber evidence="1">1.1.99.1</ecNumber>
    </recommendedName>
    <alternativeName>
        <fullName evidence="1">Betaine aldehyde dehydrogenase</fullName>
        <shortName evidence="1">BADH</shortName>
        <ecNumber evidence="1">1.2.1.8</ecNumber>
    </alternativeName>
</protein>
<gene>
    <name evidence="1" type="primary">betA</name>
    <name type="ordered locus">NWMN_2509</name>
</gene>
<dbReference type="EC" id="1.1.99.1" evidence="1"/>
<dbReference type="EC" id="1.2.1.8" evidence="1"/>
<dbReference type="EMBL" id="AP009351">
    <property type="protein sequence ID" value="BAF68781.1"/>
    <property type="molecule type" value="Genomic_DNA"/>
</dbReference>
<dbReference type="RefSeq" id="WP_000066521.1">
    <property type="nucleotide sequence ID" value="NZ_JBBIAE010000005.1"/>
</dbReference>
<dbReference type="SMR" id="A6QK99"/>
<dbReference type="KEGG" id="sae:NWMN_2509"/>
<dbReference type="HOGENOM" id="CLU_002865_7_1_9"/>
<dbReference type="UniPathway" id="UPA00529">
    <property type="reaction ID" value="UER00385"/>
</dbReference>
<dbReference type="Proteomes" id="UP000006386">
    <property type="component" value="Chromosome"/>
</dbReference>
<dbReference type="GO" id="GO:0016020">
    <property type="term" value="C:membrane"/>
    <property type="evidence" value="ECO:0007669"/>
    <property type="project" value="TreeGrafter"/>
</dbReference>
<dbReference type="GO" id="GO:0008802">
    <property type="term" value="F:betaine-aldehyde dehydrogenase (NAD+) activity"/>
    <property type="evidence" value="ECO:0007669"/>
    <property type="project" value="UniProtKB-EC"/>
</dbReference>
<dbReference type="GO" id="GO:0008812">
    <property type="term" value="F:choline dehydrogenase activity"/>
    <property type="evidence" value="ECO:0007669"/>
    <property type="project" value="UniProtKB-UniRule"/>
</dbReference>
<dbReference type="GO" id="GO:0050660">
    <property type="term" value="F:flavin adenine dinucleotide binding"/>
    <property type="evidence" value="ECO:0007669"/>
    <property type="project" value="InterPro"/>
</dbReference>
<dbReference type="GO" id="GO:0019285">
    <property type="term" value="P:glycine betaine biosynthetic process from choline"/>
    <property type="evidence" value="ECO:0007669"/>
    <property type="project" value="UniProtKB-UniRule"/>
</dbReference>
<dbReference type="Gene3D" id="3.50.50.60">
    <property type="entry name" value="FAD/NAD(P)-binding domain"/>
    <property type="match status" value="1"/>
</dbReference>
<dbReference type="Gene3D" id="3.30.560.10">
    <property type="entry name" value="Glucose Oxidase, domain 3"/>
    <property type="match status" value="1"/>
</dbReference>
<dbReference type="HAMAP" id="MF_00750">
    <property type="entry name" value="Choline_dehydrogen"/>
    <property type="match status" value="1"/>
</dbReference>
<dbReference type="InterPro" id="IPR011533">
    <property type="entry name" value="BetA"/>
</dbReference>
<dbReference type="InterPro" id="IPR036188">
    <property type="entry name" value="FAD/NAD-bd_sf"/>
</dbReference>
<dbReference type="InterPro" id="IPR012132">
    <property type="entry name" value="GMC_OxRdtase"/>
</dbReference>
<dbReference type="InterPro" id="IPR000172">
    <property type="entry name" value="GMC_OxRdtase_N"/>
</dbReference>
<dbReference type="InterPro" id="IPR007867">
    <property type="entry name" value="GMC_OxRtase_C"/>
</dbReference>
<dbReference type="NCBIfam" id="TIGR01810">
    <property type="entry name" value="betA"/>
    <property type="match status" value="1"/>
</dbReference>
<dbReference type="NCBIfam" id="NF002550">
    <property type="entry name" value="PRK02106.1"/>
    <property type="match status" value="1"/>
</dbReference>
<dbReference type="PANTHER" id="PTHR11552:SF147">
    <property type="entry name" value="CHOLINE DEHYDROGENASE, MITOCHONDRIAL"/>
    <property type="match status" value="1"/>
</dbReference>
<dbReference type="PANTHER" id="PTHR11552">
    <property type="entry name" value="GLUCOSE-METHANOL-CHOLINE GMC OXIDOREDUCTASE"/>
    <property type="match status" value="1"/>
</dbReference>
<dbReference type="Pfam" id="PF05199">
    <property type="entry name" value="GMC_oxred_C"/>
    <property type="match status" value="1"/>
</dbReference>
<dbReference type="Pfam" id="PF00732">
    <property type="entry name" value="GMC_oxred_N"/>
    <property type="match status" value="1"/>
</dbReference>
<dbReference type="PIRSF" id="PIRSF000137">
    <property type="entry name" value="Alcohol_oxidase"/>
    <property type="match status" value="1"/>
</dbReference>
<dbReference type="SUPFAM" id="SSF54373">
    <property type="entry name" value="FAD-linked reductases, C-terminal domain"/>
    <property type="match status" value="1"/>
</dbReference>
<dbReference type="SUPFAM" id="SSF51905">
    <property type="entry name" value="FAD/NAD(P)-binding domain"/>
    <property type="match status" value="1"/>
</dbReference>
<dbReference type="PROSITE" id="PS00623">
    <property type="entry name" value="GMC_OXRED_1"/>
    <property type="match status" value="1"/>
</dbReference>
<dbReference type="PROSITE" id="PS00624">
    <property type="entry name" value="GMC_OXRED_2"/>
    <property type="match status" value="1"/>
</dbReference>
<feature type="chain" id="PRO_1000072824" description="Oxygen-dependent choline dehydrogenase">
    <location>
        <begin position="1"/>
        <end position="569"/>
    </location>
</feature>
<feature type="active site" description="Proton acceptor" evidence="1">
    <location>
        <position position="475"/>
    </location>
</feature>
<feature type="binding site" evidence="1">
    <location>
        <begin position="9"/>
        <end position="38"/>
    </location>
    <ligand>
        <name>FAD</name>
        <dbReference type="ChEBI" id="CHEBI:57692"/>
    </ligand>
</feature>
<evidence type="ECO:0000255" key="1">
    <source>
        <dbReference type="HAMAP-Rule" id="MF_00750"/>
    </source>
</evidence>
<proteinExistence type="inferred from homology"/>
<sequence length="569" mass="63610">MSNKNKSYDYVIIGGGSAGSVLGNRLSEDKDKEVLVLEAGRSDYFWDLFIQMPAALMFPSGNKFYDWIYSTDEEPHMGGRKVAHARGKVLGGSSSINGMIYQRGNPMDYEGWAEPEGMETWDFAHCLPYFKKLEKTYGAAPYDKFRGHDGPIKLKRGPATNPLFQSFFDAGVEAGYHKTPDVNGFRQEGFGPFDSQVHRGRRMSASRAYLHPAMKRKNLTVETRAFVTEIHYEGRRATGVTYKKNGKLHTIDANEVILSGGAFNTPQLLQLSGIGDSEFLKSKGIEPRVHLPGVGENFEDHLEVYIQHKCKEPVSLQPSLDIKRMPFIGLQWIFTRTGAAASNHFEGGGFVRSNNEVDYPNLMFHFLPIAVRYDGQKAAVAHGYQVHVGPMYSNSRGSLKIKSKDPFEKPSIRFNYLSTEEDKKEWVEAIRVARNILSQKAMDPFNGGEISPGPEVQTDEEILDWVRRDGETALHPSCSAKMGPASDPMAVVDPLTMKVHGMENLRVVDASAMPRTTNGNIHAPVLMLAEKAADIIRGRKPLEPQYIDYYKHGVHDENEGAIEVKPYAK</sequence>
<keyword id="KW-0274">FAD</keyword>
<keyword id="KW-0285">Flavoprotein</keyword>
<keyword id="KW-0520">NAD</keyword>
<keyword id="KW-0560">Oxidoreductase</keyword>